<sequence length="503" mass="56141">MPDVKESVPPKYPGDSEGRSCKPETSGPPQEDKSGSEDPPPFLSVTGLTETVNEVSKLSNKIGMNCDYYMEEKVLPPSSLEGKVKETVHNAFWDHLKEQLSATPPDFSCALELLKEIKEILLSLLLPRQNRLRIEIEEALDMDLLKQEAEHGALKVLYLSKYVLNMMALLCAPVRDEAVQKLENITDPVWLLRGIFQVLGRMKMDMVNYTIQSLQPHLQEHSIQYERAKFQELLNKQPSLLNHTTKWLTQAAGDLTMSPPTCPDTSDSSSVAGPSPNEAANNPEPLSPTMVLCQGFLNLLLWDLENEEFPETLLMDRTRLQELKSQLHQLTVMASVLLVASSFSGSVLFGSPQFVDKLKRITKSLLEDFHSRPEEAILTVSEQVSQEIHQSLKNMGLVALSSDNTASLMGQLQNIAKKENCVCSVIDQRIHLFLKCCLVLGVQRSLLDLPGGLTLIEAELAELGQKFVNLTHHNQQVFGPYYTEILKTLISPAQALETKVESV</sequence>
<dbReference type="EMBL" id="AF269223">
    <property type="protein sequence ID" value="AAF75551.1"/>
    <property type="molecule type" value="mRNA"/>
</dbReference>
<dbReference type="EMBL" id="AY069943">
    <property type="protein sequence ID" value="AAL58042.1"/>
    <property type="molecule type" value="mRNA"/>
</dbReference>
<dbReference type="EMBL" id="AF260330">
    <property type="protein sequence ID" value="AAF91370.1"/>
    <property type="molecule type" value="mRNA"/>
</dbReference>
<dbReference type="EMBL" id="AF536532">
    <property type="protein sequence ID" value="AAN04044.1"/>
    <property type="molecule type" value="mRNA"/>
</dbReference>
<dbReference type="EMBL" id="AF536533">
    <property type="protein sequence ID" value="AAN04045.1"/>
    <property type="molecule type" value="mRNA"/>
</dbReference>
<dbReference type="EMBL" id="AK057234">
    <property type="protein sequence ID" value="BAG51889.1"/>
    <property type="molecule type" value="mRNA"/>
</dbReference>
<dbReference type="EMBL" id="AK301975">
    <property type="protein sequence ID" value="BAH13597.1"/>
    <property type="molecule type" value="mRNA"/>
</dbReference>
<dbReference type="EMBL" id="AK315078">
    <property type="protein sequence ID" value="BAG37546.1"/>
    <property type="molecule type" value="mRNA"/>
</dbReference>
<dbReference type="EMBL" id="AK301778">
    <property type="protein sequence ID" value="BAH13551.1"/>
    <property type="molecule type" value="mRNA"/>
</dbReference>
<dbReference type="EMBL" id="AK302022">
    <property type="protein sequence ID" value="BAH13610.1"/>
    <property type="molecule type" value="mRNA"/>
</dbReference>
<dbReference type="EMBL" id="AK302456">
    <property type="protein sequence ID" value="BAH13714.1"/>
    <property type="molecule type" value="mRNA"/>
</dbReference>
<dbReference type="EMBL" id="AL138721">
    <property type="status" value="NOT_ANNOTATED_CDS"/>
    <property type="molecule type" value="Genomic_DNA"/>
</dbReference>
<dbReference type="EMBL" id="CH471081">
    <property type="protein sequence ID" value="EAX03808.1"/>
    <property type="molecule type" value="Genomic_DNA"/>
</dbReference>
<dbReference type="EMBL" id="CH471081">
    <property type="protein sequence ID" value="EAX03809.1"/>
    <property type="molecule type" value="Genomic_DNA"/>
</dbReference>
<dbReference type="EMBL" id="BC033729">
    <property type="protein sequence ID" value="AAH33729.1"/>
    <property type="molecule type" value="mRNA"/>
</dbReference>
<dbReference type="EMBL" id="BC040003">
    <property type="protein sequence ID" value="AAH40003.1"/>
    <property type="molecule type" value="mRNA"/>
</dbReference>
<dbReference type="EMBL" id="BC048418">
    <property type="protein sequence ID" value="AAH48418.1"/>
    <property type="molecule type" value="mRNA"/>
</dbReference>
<dbReference type="EMBL" id="BC090050">
    <property type="protein sequence ID" value="AAH90050.1"/>
    <property type="molecule type" value="mRNA"/>
</dbReference>
<dbReference type="CCDS" id="CCDS47413.2">
    <molecule id="Q8WWU5-1"/>
</dbReference>
<dbReference type="CCDS" id="CCDS4799.1">
    <molecule id="Q8WWU5-2"/>
</dbReference>
<dbReference type="CCDS" id="CCDS59015.1">
    <molecule id="Q8WWU5-3"/>
</dbReference>
<dbReference type="CCDS" id="CCDS59016.1">
    <molecule id="Q8WWU5-6"/>
</dbReference>
<dbReference type="CCDS" id="CCDS59017.1">
    <molecule id="Q8WWU5-4"/>
</dbReference>
<dbReference type="RefSeq" id="NP_001087197.1">
    <property type="nucleotide sequence ID" value="NM_001093728.2"/>
</dbReference>
<dbReference type="RefSeq" id="NP_001248746.1">
    <property type="nucleotide sequence ID" value="NM_001261817.1"/>
</dbReference>
<dbReference type="RefSeq" id="NP_001248747.1">
    <molecule id="Q8WWU5-4"/>
    <property type="nucleotide sequence ID" value="NM_001261818.2"/>
</dbReference>
<dbReference type="RefSeq" id="NP_001248748.1">
    <molecule id="Q8WWU5-6"/>
    <property type="nucleotide sequence ID" value="NM_001261819.2"/>
</dbReference>
<dbReference type="RefSeq" id="NP_001248749.1">
    <molecule id="Q8WWU5-3"/>
    <property type="nucleotide sequence ID" value="NM_001261820.2"/>
</dbReference>
<dbReference type="RefSeq" id="NP_001248750.1">
    <molecule id="Q8WWU5-3"/>
    <property type="nucleotide sequence ID" value="NM_001261821.2"/>
</dbReference>
<dbReference type="RefSeq" id="NP_001353252.1">
    <molecule id="Q8WWU5-3"/>
    <property type="nucleotide sequence ID" value="NM_001366323.2"/>
</dbReference>
<dbReference type="RefSeq" id="NP_001353253.1">
    <molecule id="Q8WWU5-2"/>
    <property type="nucleotide sequence ID" value="NM_001366324.2"/>
</dbReference>
<dbReference type="RefSeq" id="NP_001357616.1">
    <molecule id="Q8WWU5-1"/>
    <property type="nucleotide sequence ID" value="NM_001370687.1"/>
</dbReference>
<dbReference type="RefSeq" id="NP_061149.1">
    <molecule id="Q8WWU5-2"/>
    <property type="nucleotide sequence ID" value="NM_018679.6"/>
</dbReference>
<dbReference type="BioGRID" id="112814">
    <property type="interactions" value="13"/>
</dbReference>
<dbReference type="FunCoup" id="Q8WWU5">
    <property type="interactions" value="44"/>
</dbReference>
<dbReference type="IntAct" id="Q8WWU5">
    <property type="interactions" value="12"/>
</dbReference>
<dbReference type="STRING" id="9606.ENSP00000501201"/>
<dbReference type="iPTMnet" id="Q8WWU5"/>
<dbReference type="PhosphoSitePlus" id="Q8WWU5"/>
<dbReference type="BioMuta" id="TCP11"/>
<dbReference type="DMDM" id="74716246"/>
<dbReference type="jPOST" id="Q8WWU5"/>
<dbReference type="MassIVE" id="Q8WWU5"/>
<dbReference type="PaxDb" id="9606-ENSP00000308708"/>
<dbReference type="PeptideAtlas" id="Q8WWU5"/>
<dbReference type="ProteomicsDB" id="17272"/>
<dbReference type="ProteomicsDB" id="6850"/>
<dbReference type="ProteomicsDB" id="6866"/>
<dbReference type="ProteomicsDB" id="74933">
    <molecule id="Q8WWU5-1"/>
</dbReference>
<dbReference type="ProteomicsDB" id="74934">
    <molecule id="Q8WWU5-2"/>
</dbReference>
<dbReference type="ProteomicsDB" id="74935">
    <molecule id="Q8WWU5-3"/>
</dbReference>
<dbReference type="TopDownProteomics" id="Q8WWU5-2">
    <molecule id="Q8WWU5-2"/>
</dbReference>
<dbReference type="Antibodypedia" id="29446">
    <property type="antibodies" value="99 antibodies from 20 providers"/>
</dbReference>
<dbReference type="DNASU" id="6954"/>
<dbReference type="Ensembl" id="ENST00000244645.7">
    <molecule id="Q8WWU5-2"/>
    <property type="protein sequence ID" value="ENSP00000244645.3"/>
    <property type="gene ID" value="ENSG00000124678.20"/>
</dbReference>
<dbReference type="Ensembl" id="ENST00000311875.11">
    <molecule id="Q8WWU5-1"/>
    <property type="protein sequence ID" value="ENSP00000308708.6"/>
    <property type="gene ID" value="ENSG00000124678.20"/>
</dbReference>
<dbReference type="Ensembl" id="ENST00000373974.8">
    <molecule id="Q8WWU5-4"/>
    <property type="protein sequence ID" value="ENSP00000363085.4"/>
    <property type="gene ID" value="ENSG00000124678.20"/>
</dbReference>
<dbReference type="Ensembl" id="ENST00000373979.6">
    <molecule id="Q8WWU5-2"/>
    <property type="protein sequence ID" value="ENSP00000363091.2"/>
    <property type="gene ID" value="ENSG00000124678.20"/>
</dbReference>
<dbReference type="Ensembl" id="ENST00000412155.6">
    <molecule id="Q8WWU5-6"/>
    <property type="protein sequence ID" value="ENSP00000402816.2"/>
    <property type="gene ID" value="ENSG00000124678.20"/>
</dbReference>
<dbReference type="Ensembl" id="ENST00000418521.6">
    <molecule id="Q8WWU5-3"/>
    <property type="protein sequence ID" value="ENSP00000415320.2"/>
    <property type="gene ID" value="ENSG00000124678.20"/>
</dbReference>
<dbReference type="Ensembl" id="ENST00000512012.5">
    <molecule id="Q8WWU5-1"/>
    <property type="protein sequence ID" value="ENSP00000425995.1"/>
    <property type="gene ID" value="ENSG00000124678.20"/>
</dbReference>
<dbReference type="Ensembl" id="ENST00000611141.4">
    <molecule id="Q8WWU5-3"/>
    <property type="protein sequence ID" value="ENSP00000478603.1"/>
    <property type="gene ID" value="ENSG00000124678.20"/>
</dbReference>
<dbReference type="Ensembl" id="ENST00000673754.1">
    <molecule id="Q8WWU5-7"/>
    <property type="protein sequence ID" value="ENSP00000501201.1"/>
    <property type="gene ID" value="ENSG00000124678.20"/>
</dbReference>
<dbReference type="GeneID" id="6954"/>
<dbReference type="KEGG" id="hsa:6954"/>
<dbReference type="MANE-Select" id="ENST00000311875.11">
    <property type="protein sequence ID" value="ENSP00000308708.6"/>
    <property type="RefSeq nucleotide sequence ID" value="NM_001370687.1"/>
    <property type="RefSeq protein sequence ID" value="NP_001357616.1"/>
</dbReference>
<dbReference type="UCSC" id="uc003ojz.3">
    <molecule id="Q8WWU5-1"/>
    <property type="organism name" value="human"/>
</dbReference>
<dbReference type="AGR" id="HGNC:11658"/>
<dbReference type="CTD" id="6954"/>
<dbReference type="DisGeNET" id="6954"/>
<dbReference type="GeneCards" id="TCP11"/>
<dbReference type="HGNC" id="HGNC:11658">
    <property type="gene designation" value="TCP11"/>
</dbReference>
<dbReference type="HPA" id="ENSG00000124678">
    <property type="expression patterns" value="Tissue enriched (testis)"/>
</dbReference>
<dbReference type="MIM" id="186982">
    <property type="type" value="gene"/>
</dbReference>
<dbReference type="neXtProt" id="NX_Q8WWU5"/>
<dbReference type="OpenTargets" id="ENSG00000124678"/>
<dbReference type="PharmGKB" id="PA36409"/>
<dbReference type="VEuPathDB" id="HostDB:ENSG00000124678"/>
<dbReference type="eggNOG" id="KOG1981">
    <property type="taxonomic scope" value="Eukaryota"/>
</dbReference>
<dbReference type="GeneTree" id="ENSGT00940000161869"/>
<dbReference type="HOGENOM" id="CLU_026469_0_0_1"/>
<dbReference type="InParanoid" id="Q8WWU5"/>
<dbReference type="OMA" id="QHERATF"/>
<dbReference type="OrthoDB" id="276323at2759"/>
<dbReference type="PAN-GO" id="Q8WWU5">
    <property type="GO annotations" value="4 GO annotations based on evolutionary models"/>
</dbReference>
<dbReference type="PhylomeDB" id="Q8WWU5"/>
<dbReference type="TreeFam" id="TF313385"/>
<dbReference type="PathwayCommons" id="Q8WWU5"/>
<dbReference type="SignaLink" id="Q8WWU5"/>
<dbReference type="BioGRID-ORCS" id="6954">
    <property type="hits" value="8 hits in 1138 CRISPR screens"/>
</dbReference>
<dbReference type="GeneWiki" id="TCP11"/>
<dbReference type="GenomeRNAi" id="6954"/>
<dbReference type="Pharos" id="Q8WWU5">
    <property type="development level" value="Tbio"/>
</dbReference>
<dbReference type="PRO" id="PR:Q8WWU5"/>
<dbReference type="Proteomes" id="UP000005640">
    <property type="component" value="Chromosome 6"/>
</dbReference>
<dbReference type="RNAct" id="Q8WWU5">
    <property type="molecule type" value="protein"/>
</dbReference>
<dbReference type="Bgee" id="ENSG00000124678">
    <property type="expression patterns" value="Expressed in sperm and 104 other cell types or tissues"/>
</dbReference>
<dbReference type="ExpressionAtlas" id="Q8WWU5">
    <property type="expression patterns" value="baseline and differential"/>
</dbReference>
<dbReference type="GO" id="GO:0001669">
    <property type="term" value="C:acrosomal vesicle"/>
    <property type="evidence" value="ECO:0000314"/>
    <property type="project" value="UniProtKB"/>
</dbReference>
<dbReference type="GO" id="GO:0016020">
    <property type="term" value="C:membrane"/>
    <property type="evidence" value="ECO:0007669"/>
    <property type="project" value="UniProtKB-SubCell"/>
</dbReference>
<dbReference type="GO" id="GO:0036126">
    <property type="term" value="C:sperm flagellum"/>
    <property type="evidence" value="ECO:0000314"/>
    <property type="project" value="UniProtKB"/>
</dbReference>
<dbReference type="GO" id="GO:0097225">
    <property type="term" value="C:sperm midpiece"/>
    <property type="evidence" value="ECO:0000250"/>
    <property type="project" value="UniProtKB"/>
</dbReference>
<dbReference type="GO" id="GO:0007189">
    <property type="term" value="P:adenylate cyclase-activating G protein-coupled receptor signaling pathway"/>
    <property type="evidence" value="ECO:0000250"/>
    <property type="project" value="UniProtKB"/>
</dbReference>
<dbReference type="GO" id="GO:0007281">
    <property type="term" value="P:germ cell development"/>
    <property type="evidence" value="ECO:0000270"/>
    <property type="project" value="UniProtKB"/>
</dbReference>
<dbReference type="GO" id="GO:0010737">
    <property type="term" value="P:protein kinase A signaling"/>
    <property type="evidence" value="ECO:0000250"/>
    <property type="project" value="UniProtKB"/>
</dbReference>
<dbReference type="GO" id="GO:1902490">
    <property type="term" value="P:regulation of sperm capacitation"/>
    <property type="evidence" value="ECO:0000250"/>
    <property type="project" value="UniProtKB"/>
</dbReference>
<dbReference type="GO" id="GO:0007283">
    <property type="term" value="P:spermatogenesis"/>
    <property type="evidence" value="ECO:0007669"/>
    <property type="project" value="UniProtKB-KW"/>
</dbReference>
<dbReference type="InterPro" id="IPR008862">
    <property type="entry name" value="Tcp11"/>
</dbReference>
<dbReference type="PANTHER" id="PTHR12832:SF14">
    <property type="entry name" value="T-COMPLEX PROTEIN 11 HOMOLOG"/>
    <property type="match status" value="1"/>
</dbReference>
<dbReference type="PANTHER" id="PTHR12832">
    <property type="entry name" value="TESTIS-SPECIFIC PROTEIN PBS13 T-COMPLEX 11"/>
    <property type="match status" value="1"/>
</dbReference>
<dbReference type="Pfam" id="PF05794">
    <property type="entry name" value="Tcp11"/>
    <property type="match status" value="1"/>
</dbReference>
<protein>
    <recommendedName>
        <fullName>T-complex protein 11 homolog</fullName>
    </recommendedName>
</protein>
<organism>
    <name type="scientific">Homo sapiens</name>
    <name type="common">Human</name>
    <dbReference type="NCBI Taxonomy" id="9606"/>
    <lineage>
        <taxon>Eukaryota</taxon>
        <taxon>Metazoa</taxon>
        <taxon>Chordata</taxon>
        <taxon>Craniata</taxon>
        <taxon>Vertebrata</taxon>
        <taxon>Euteleostomi</taxon>
        <taxon>Mammalia</taxon>
        <taxon>Eutheria</taxon>
        <taxon>Euarchontoglires</taxon>
        <taxon>Primates</taxon>
        <taxon>Haplorrhini</taxon>
        <taxon>Catarrhini</taxon>
        <taxon>Hominidae</taxon>
        <taxon>Homo</taxon>
    </lineage>
</organism>
<reference key="1">
    <citation type="journal article" date="2002" name="Mol. Hum. Reprod.">
        <title>Molecular characterization of the TCP11 gene which is the human homologue of the mouse gene encoding the receptor of fertilization promoting peptide.</title>
        <authorList>
            <person name="Ma Y."/>
            <person name="Zhang S."/>
            <person name="Xia Q."/>
            <person name="Zhang G."/>
            <person name="Huang X."/>
            <person name="Huang M."/>
            <person name="Xiao C."/>
            <person name="Pan A."/>
            <person name="Sun Y."/>
            <person name="Lebo R."/>
            <person name="Milunsky A."/>
        </authorList>
    </citation>
    <scope>NUCLEOTIDE SEQUENCE [MRNA] (ISOFORM 2)</scope>
    <scope>TISSUE SPECIFICITY</scope>
    <source>
        <tissue>Testis</tissue>
    </source>
</reference>
<reference key="2">
    <citation type="journal article" date="2003" name="Sheng Wu Hua Xue Yu Sheng Wu Wu Li Xue Bao">
        <title>Cloning, expression and alternative splicing of a novel isoform of human TCP11b gene.</title>
        <authorList>
            <person name="Ma Y.X."/>
            <person name="Zhang S.Z."/>
            <person name="Wu Q.Q."/>
            <person name="Sun Y."/>
        </authorList>
    </citation>
    <scope>NUCLEOTIDE SEQUENCE [MRNA] (ISOFORM 1)</scope>
</reference>
<reference key="3">
    <citation type="journal article" date="2003" name="Zhongguo Yi Xue Ke Xue Yuan Xue Bao">
        <title>Cloning, expression, and alternative splicing of the novel isoform of hTCP11 gene.</title>
        <authorList>
            <person name="Ma Y.X."/>
            <person name="Zhang S.Z."/>
            <person name="Wu Q.Q."/>
            <person name="Sun Y."/>
            <person name="Qiu W.M."/>
            <person name="Xu W.M."/>
        </authorList>
    </citation>
    <scope>NUCLEOTIDE SEQUENCE [MRNA] (ISOFORM 3)</scope>
</reference>
<reference key="4">
    <citation type="journal article" date="2004" name="Nat. Genet.">
        <title>Complete sequencing and characterization of 21,243 full-length human cDNAs.</title>
        <authorList>
            <person name="Ota T."/>
            <person name="Suzuki Y."/>
            <person name="Nishikawa T."/>
            <person name="Otsuki T."/>
            <person name="Sugiyama T."/>
            <person name="Irie R."/>
            <person name="Wakamatsu A."/>
            <person name="Hayashi K."/>
            <person name="Sato H."/>
            <person name="Nagai K."/>
            <person name="Kimura K."/>
            <person name="Makita H."/>
            <person name="Sekine M."/>
            <person name="Obayashi M."/>
            <person name="Nishi T."/>
            <person name="Shibahara T."/>
            <person name="Tanaka T."/>
            <person name="Ishii S."/>
            <person name="Yamamoto J."/>
            <person name="Saito K."/>
            <person name="Kawai Y."/>
            <person name="Isono Y."/>
            <person name="Nakamura Y."/>
            <person name="Nagahari K."/>
            <person name="Murakami K."/>
            <person name="Yasuda T."/>
            <person name="Iwayanagi T."/>
            <person name="Wagatsuma M."/>
            <person name="Shiratori A."/>
            <person name="Sudo H."/>
            <person name="Hosoiri T."/>
            <person name="Kaku Y."/>
            <person name="Kodaira H."/>
            <person name="Kondo H."/>
            <person name="Sugawara M."/>
            <person name="Takahashi M."/>
            <person name="Kanda K."/>
            <person name="Yokoi T."/>
            <person name="Furuya T."/>
            <person name="Kikkawa E."/>
            <person name="Omura Y."/>
            <person name="Abe K."/>
            <person name="Kamihara K."/>
            <person name="Katsuta N."/>
            <person name="Sato K."/>
            <person name="Tanikawa M."/>
            <person name="Yamazaki M."/>
            <person name="Ninomiya K."/>
            <person name="Ishibashi T."/>
            <person name="Yamashita H."/>
            <person name="Murakawa K."/>
            <person name="Fujimori K."/>
            <person name="Tanai H."/>
            <person name="Kimata M."/>
            <person name="Watanabe M."/>
            <person name="Hiraoka S."/>
            <person name="Chiba Y."/>
            <person name="Ishida S."/>
            <person name="Ono Y."/>
            <person name="Takiguchi S."/>
            <person name="Watanabe S."/>
            <person name="Yosida M."/>
            <person name="Hotuta T."/>
            <person name="Kusano J."/>
            <person name="Kanehori K."/>
            <person name="Takahashi-Fujii A."/>
            <person name="Hara H."/>
            <person name="Tanase T.-O."/>
            <person name="Nomura Y."/>
            <person name="Togiya S."/>
            <person name="Komai F."/>
            <person name="Hara R."/>
            <person name="Takeuchi K."/>
            <person name="Arita M."/>
            <person name="Imose N."/>
            <person name="Musashino K."/>
            <person name="Yuuki H."/>
            <person name="Oshima A."/>
            <person name="Sasaki N."/>
            <person name="Aotsuka S."/>
            <person name="Yoshikawa Y."/>
            <person name="Matsunawa H."/>
            <person name="Ichihara T."/>
            <person name="Shiohata N."/>
            <person name="Sano S."/>
            <person name="Moriya S."/>
            <person name="Momiyama H."/>
            <person name="Satoh N."/>
            <person name="Takami S."/>
            <person name="Terashima Y."/>
            <person name="Suzuki O."/>
            <person name="Nakagawa S."/>
            <person name="Senoh A."/>
            <person name="Mizoguchi H."/>
            <person name="Goto Y."/>
            <person name="Shimizu F."/>
            <person name="Wakebe H."/>
            <person name="Hishigaki H."/>
            <person name="Watanabe T."/>
            <person name="Sugiyama A."/>
            <person name="Takemoto M."/>
            <person name="Kawakami B."/>
            <person name="Yamazaki M."/>
            <person name="Watanabe K."/>
            <person name="Kumagai A."/>
            <person name="Itakura S."/>
            <person name="Fukuzumi Y."/>
            <person name="Fujimori Y."/>
            <person name="Komiyama M."/>
            <person name="Tashiro H."/>
            <person name="Tanigami A."/>
            <person name="Fujiwara T."/>
            <person name="Ono T."/>
            <person name="Yamada K."/>
            <person name="Fujii Y."/>
            <person name="Ozaki K."/>
            <person name="Hirao M."/>
            <person name="Ohmori Y."/>
            <person name="Kawabata A."/>
            <person name="Hikiji T."/>
            <person name="Kobatake N."/>
            <person name="Inagaki H."/>
            <person name="Ikema Y."/>
            <person name="Okamoto S."/>
            <person name="Okitani R."/>
            <person name="Kawakami T."/>
            <person name="Noguchi S."/>
            <person name="Itoh T."/>
            <person name="Shigeta K."/>
            <person name="Senba T."/>
            <person name="Matsumura K."/>
            <person name="Nakajima Y."/>
            <person name="Mizuno T."/>
            <person name="Morinaga M."/>
            <person name="Sasaki M."/>
            <person name="Togashi T."/>
            <person name="Oyama M."/>
            <person name="Hata H."/>
            <person name="Watanabe M."/>
            <person name="Komatsu T."/>
            <person name="Mizushima-Sugano J."/>
            <person name="Satoh T."/>
            <person name="Shirai Y."/>
            <person name="Takahashi Y."/>
            <person name="Nakagawa K."/>
            <person name="Okumura K."/>
            <person name="Nagase T."/>
            <person name="Nomura N."/>
            <person name="Kikuchi H."/>
            <person name="Masuho Y."/>
            <person name="Yamashita R."/>
            <person name="Nakai K."/>
            <person name="Yada T."/>
            <person name="Nakamura Y."/>
            <person name="Ohara O."/>
            <person name="Isogai T."/>
            <person name="Sugano S."/>
        </authorList>
    </citation>
    <scope>NUCLEOTIDE SEQUENCE [LARGE SCALE MRNA] (ISOFORMS 1; 2; 4; 5 AND 6)</scope>
    <scope>VARIANT ALA-253</scope>
    <source>
        <tissue>Testis</tissue>
    </source>
</reference>
<reference key="5">
    <citation type="journal article" date="2003" name="Nature">
        <title>The DNA sequence and analysis of human chromosome 6.</title>
        <authorList>
            <person name="Mungall A.J."/>
            <person name="Palmer S.A."/>
            <person name="Sims S.K."/>
            <person name="Edwards C.A."/>
            <person name="Ashurst J.L."/>
            <person name="Wilming L."/>
            <person name="Jones M.C."/>
            <person name="Horton R."/>
            <person name="Hunt S.E."/>
            <person name="Scott C.E."/>
            <person name="Gilbert J.G.R."/>
            <person name="Clamp M.E."/>
            <person name="Bethel G."/>
            <person name="Milne S."/>
            <person name="Ainscough R."/>
            <person name="Almeida J.P."/>
            <person name="Ambrose K.D."/>
            <person name="Andrews T.D."/>
            <person name="Ashwell R.I.S."/>
            <person name="Babbage A.K."/>
            <person name="Bagguley C.L."/>
            <person name="Bailey J."/>
            <person name="Banerjee R."/>
            <person name="Barker D.J."/>
            <person name="Barlow K.F."/>
            <person name="Bates K."/>
            <person name="Beare D.M."/>
            <person name="Beasley H."/>
            <person name="Beasley O."/>
            <person name="Bird C.P."/>
            <person name="Blakey S.E."/>
            <person name="Bray-Allen S."/>
            <person name="Brook J."/>
            <person name="Brown A.J."/>
            <person name="Brown J.Y."/>
            <person name="Burford D.C."/>
            <person name="Burrill W."/>
            <person name="Burton J."/>
            <person name="Carder C."/>
            <person name="Carter N.P."/>
            <person name="Chapman J.C."/>
            <person name="Clark S.Y."/>
            <person name="Clark G."/>
            <person name="Clee C.M."/>
            <person name="Clegg S."/>
            <person name="Cobley V."/>
            <person name="Collier R.E."/>
            <person name="Collins J.E."/>
            <person name="Colman L.K."/>
            <person name="Corby N.R."/>
            <person name="Coville G.J."/>
            <person name="Culley K.M."/>
            <person name="Dhami P."/>
            <person name="Davies J."/>
            <person name="Dunn M."/>
            <person name="Earthrowl M.E."/>
            <person name="Ellington A.E."/>
            <person name="Evans K.A."/>
            <person name="Faulkner L."/>
            <person name="Francis M.D."/>
            <person name="Frankish A."/>
            <person name="Frankland J."/>
            <person name="French L."/>
            <person name="Garner P."/>
            <person name="Garnett J."/>
            <person name="Ghori M.J."/>
            <person name="Gilby L.M."/>
            <person name="Gillson C.J."/>
            <person name="Glithero R.J."/>
            <person name="Grafham D.V."/>
            <person name="Grant M."/>
            <person name="Gribble S."/>
            <person name="Griffiths C."/>
            <person name="Griffiths M.N.D."/>
            <person name="Hall R."/>
            <person name="Halls K.S."/>
            <person name="Hammond S."/>
            <person name="Harley J.L."/>
            <person name="Hart E.A."/>
            <person name="Heath P.D."/>
            <person name="Heathcott R."/>
            <person name="Holmes S.J."/>
            <person name="Howden P.J."/>
            <person name="Howe K.L."/>
            <person name="Howell G.R."/>
            <person name="Huckle E."/>
            <person name="Humphray S.J."/>
            <person name="Humphries M.D."/>
            <person name="Hunt A.R."/>
            <person name="Johnson C.M."/>
            <person name="Joy A.A."/>
            <person name="Kay M."/>
            <person name="Keenan S.J."/>
            <person name="Kimberley A.M."/>
            <person name="King A."/>
            <person name="Laird G.K."/>
            <person name="Langford C."/>
            <person name="Lawlor S."/>
            <person name="Leongamornlert D.A."/>
            <person name="Leversha M."/>
            <person name="Lloyd C.R."/>
            <person name="Lloyd D.M."/>
            <person name="Loveland J.E."/>
            <person name="Lovell J."/>
            <person name="Martin S."/>
            <person name="Mashreghi-Mohammadi M."/>
            <person name="Maslen G.L."/>
            <person name="Matthews L."/>
            <person name="McCann O.T."/>
            <person name="McLaren S.J."/>
            <person name="McLay K."/>
            <person name="McMurray A."/>
            <person name="Moore M.J.F."/>
            <person name="Mullikin J.C."/>
            <person name="Niblett D."/>
            <person name="Nickerson T."/>
            <person name="Novik K.L."/>
            <person name="Oliver K."/>
            <person name="Overton-Larty E.K."/>
            <person name="Parker A."/>
            <person name="Patel R."/>
            <person name="Pearce A.V."/>
            <person name="Peck A.I."/>
            <person name="Phillimore B.J.C.T."/>
            <person name="Phillips S."/>
            <person name="Plumb R.W."/>
            <person name="Porter K.M."/>
            <person name="Ramsey Y."/>
            <person name="Ranby S.A."/>
            <person name="Rice C.M."/>
            <person name="Ross M.T."/>
            <person name="Searle S.M."/>
            <person name="Sehra H.K."/>
            <person name="Sheridan E."/>
            <person name="Skuce C.D."/>
            <person name="Smith S."/>
            <person name="Smith M."/>
            <person name="Spraggon L."/>
            <person name="Squares S.L."/>
            <person name="Steward C.A."/>
            <person name="Sycamore N."/>
            <person name="Tamlyn-Hall G."/>
            <person name="Tester J."/>
            <person name="Theaker A.J."/>
            <person name="Thomas D.W."/>
            <person name="Thorpe A."/>
            <person name="Tracey A."/>
            <person name="Tromans A."/>
            <person name="Tubby B."/>
            <person name="Wall M."/>
            <person name="Wallis J.M."/>
            <person name="West A.P."/>
            <person name="White S.S."/>
            <person name="Whitehead S.L."/>
            <person name="Whittaker H."/>
            <person name="Wild A."/>
            <person name="Willey D.J."/>
            <person name="Wilmer T.E."/>
            <person name="Wood J.M."/>
            <person name="Wray P.W."/>
            <person name="Wyatt J.C."/>
            <person name="Young L."/>
            <person name="Younger R.M."/>
            <person name="Bentley D.R."/>
            <person name="Coulson A."/>
            <person name="Durbin R.M."/>
            <person name="Hubbard T."/>
            <person name="Sulston J.E."/>
            <person name="Dunham I."/>
            <person name="Rogers J."/>
            <person name="Beck S."/>
        </authorList>
    </citation>
    <scope>NUCLEOTIDE SEQUENCE [LARGE SCALE GENOMIC DNA]</scope>
</reference>
<reference key="6">
    <citation type="submission" date="2005-07" db="EMBL/GenBank/DDBJ databases">
        <authorList>
            <person name="Mural R.J."/>
            <person name="Istrail S."/>
            <person name="Sutton G.G."/>
            <person name="Florea L."/>
            <person name="Halpern A.L."/>
            <person name="Mobarry C.M."/>
            <person name="Lippert R."/>
            <person name="Walenz B."/>
            <person name="Shatkay H."/>
            <person name="Dew I."/>
            <person name="Miller J.R."/>
            <person name="Flanigan M.J."/>
            <person name="Edwards N.J."/>
            <person name="Bolanos R."/>
            <person name="Fasulo D."/>
            <person name="Halldorsson B.V."/>
            <person name="Hannenhalli S."/>
            <person name="Turner R."/>
            <person name="Yooseph S."/>
            <person name="Lu F."/>
            <person name="Nusskern D.R."/>
            <person name="Shue B.C."/>
            <person name="Zheng X.H."/>
            <person name="Zhong F."/>
            <person name="Delcher A.L."/>
            <person name="Huson D.H."/>
            <person name="Kravitz S.A."/>
            <person name="Mouchard L."/>
            <person name="Reinert K."/>
            <person name="Remington K.A."/>
            <person name="Clark A.G."/>
            <person name="Waterman M.S."/>
            <person name="Eichler E.E."/>
            <person name="Adams M.D."/>
            <person name="Hunkapiller M.W."/>
            <person name="Myers E.W."/>
            <person name="Venter J.C."/>
        </authorList>
    </citation>
    <scope>NUCLEOTIDE SEQUENCE [LARGE SCALE GENOMIC DNA]</scope>
</reference>
<reference key="7">
    <citation type="journal article" date="2004" name="Genome Res.">
        <title>The status, quality, and expansion of the NIH full-length cDNA project: the Mammalian Gene Collection (MGC).</title>
        <authorList>
            <consortium name="The MGC Project Team"/>
        </authorList>
    </citation>
    <scope>NUCLEOTIDE SEQUENCE [LARGE SCALE MRNA] (ISOFORMS 2 AND 3)</scope>
    <source>
        <tissue>Brain</tissue>
        <tissue>Testis</tissue>
    </source>
</reference>
<reference key="8">
    <citation type="journal article" date="2011" name="Tohoku J. Exp. Med.">
        <title>Human t-complex protein 11 (TCP11), a testis-specific gene product, is a potential determinant of the sperm morphology.</title>
        <authorList>
            <person name="Liu Y."/>
            <person name="Jiang M."/>
            <person name="Li C."/>
            <person name="Yang P."/>
            <person name="Sun H."/>
            <person name="Tao D."/>
            <person name="Zhang S."/>
            <person name="Ma Y."/>
        </authorList>
    </citation>
    <scope>INTERACTION WITH ODF1 (ISOFORMS 2 AND 3)</scope>
    <scope>TISSUE SPECIFICITY (ISOFORMS 1; 2 AND 3)</scope>
</reference>
<accession>Q8WWU5</accession>
<accession>B2RCE9</accession>
<accession>B3KQ27</accession>
<accession>B7Z7B5</accession>
<accession>B7Z7G1</accession>
<accession>B7Z7H4</accession>
<accession>B7Z7S8</accession>
<accession>E7EP29</accession>
<accession>J3KNG1</accession>
<accession>Q8NF85</accession>
<accession>Q9NQZ9</accession>
<accession>Q9NR39</accession>
<name>TCP11_HUMAN</name>
<comment type="function">
    <text evidence="1">Plays a role in the process of sperm capacitation and acrosome reactions. Probable receptor for the putative fertilization-promoting peptide (FPP) at the sperm membrane that may modulate the activity of the adenylyl cyclase cAMP pathway.</text>
</comment>
<comment type="subunit">
    <text evidence="1 6">Found in a complex at least composed of MROH2B, PRKACA isoform 2 and TCP11. Interacts with MROH2B. Interacts with PRKACA isoform 2 (By similarity). Isoform 2 and isoform 3 interact with ODF1 (via leucine zipper motif) (PubMed:21597245).</text>
</comment>
<comment type="interaction">
    <interactant intactId="EBI-17721485">
        <id>Q8WWU5-7</id>
    </interactant>
    <interactant intactId="EBI-745226">
        <id>Q13155</id>
        <label>AIMP2</label>
    </interactant>
    <organismsDiffer>false</organismsDiffer>
    <experiments>3</experiments>
</comment>
<comment type="interaction">
    <interactant intactId="EBI-17721485">
        <id>Q8WWU5-7</id>
    </interactant>
    <interactant intactId="EBI-81589">
        <id>Q9NPI8</id>
        <label>FANCF</label>
    </interactant>
    <organismsDiffer>false</organismsDiffer>
    <experiments>3</experiments>
</comment>
<comment type="interaction">
    <interactant intactId="EBI-17721485">
        <id>Q8WWU5-7</id>
    </interactant>
    <interactant intactId="EBI-18300553">
        <id>Q8TC17</id>
        <label>GRAPL</label>
    </interactant>
    <organismsDiffer>false</organismsDiffer>
    <experiments>3</experiments>
</comment>
<comment type="interaction">
    <interactant intactId="EBI-17721485">
        <id>Q8WWU5-7</id>
    </interactant>
    <interactant intactId="EBI-748043">
        <id>O43708</id>
        <label>GSTZ1</label>
    </interactant>
    <organismsDiffer>false</organismsDiffer>
    <experiments>3</experiments>
</comment>
<comment type="interaction">
    <interactant intactId="EBI-17721485">
        <id>Q8WWU5-7</id>
    </interactant>
    <interactant intactId="EBI-10241252">
        <id>Q3SY46</id>
        <label>KRTAP13-3</label>
    </interactant>
    <organismsDiffer>false</organismsDiffer>
    <experiments>3</experiments>
</comment>
<comment type="interaction">
    <interactant intactId="EBI-17721485">
        <id>Q8WWU5-7</id>
    </interactant>
    <interactant intactId="EBI-17721490">
        <id>Q9NUN5-4</id>
        <label>LMBRD1</label>
    </interactant>
    <organismsDiffer>false</organismsDiffer>
    <experiments>3</experiments>
</comment>
<comment type="interaction">
    <interactant intactId="EBI-17721485">
        <id>Q8WWU5-7</id>
    </interactant>
    <interactant intactId="EBI-492564">
        <id>Q02750</id>
        <label>MAP2K1</label>
    </interactant>
    <organismsDiffer>false</organismsDiffer>
    <experiments>3</experiments>
</comment>
<comment type="interaction">
    <interactant intactId="EBI-17721485">
        <id>Q8WWU5-7</id>
    </interactant>
    <interactant intactId="EBI-514199">
        <id>Q9H204</id>
        <label>MED28</label>
    </interactant>
    <organismsDiffer>false</organismsDiffer>
    <experiments>3</experiments>
</comment>
<comment type="interaction">
    <interactant intactId="EBI-17721485">
        <id>Q8WWU5-7</id>
    </interactant>
    <interactant intactId="EBI-18212103">
        <id>Q9GZQ6</id>
        <label>NPFFR1</label>
    </interactant>
    <organismsDiffer>false</organismsDiffer>
    <experiments>3</experiments>
</comment>
<comment type="interaction">
    <interactant intactId="EBI-17721485">
        <id>Q8WWU5-7</id>
    </interactant>
    <interactant intactId="EBI-4395732">
        <id>P0C7X2</id>
        <label>ZNF688</label>
    </interactant>
    <organismsDiffer>false</organismsDiffer>
    <experiments>3</experiments>
</comment>
<comment type="subcellular location">
    <subcellularLocation>
        <location evidence="13">Membrane</location>
        <topology evidence="13">Single-pass membrane protein</topology>
    </subcellularLocation>
    <subcellularLocation>
        <location evidence="1">Cell projection</location>
        <location evidence="1">Cilium</location>
        <location evidence="1">Flagellum</location>
    </subcellularLocation>
    <subcellularLocation>
        <location evidence="1">Cytoplasmic vesicle</location>
        <location evidence="1">Secretory vesicle</location>
        <location evidence="1">Acrosome</location>
    </subcellularLocation>
    <text evidence="1">Localizes on the acrosomal cap region of acrosome-intact, but not acrosome-reacted sperm. Colocalizes with MROH2B and PRKACA on the acrosome and tail regions in round spermatids and spermatozoa regardless of the capacitation status of the sperm.</text>
</comment>
<comment type="alternative products">
    <event type="alternative splicing"/>
    <isoform>
        <id>Q8WWU5-1</id>
        <name>1</name>
        <name evidence="8">TCP11b</name>
        <sequence type="displayed"/>
    </isoform>
    <isoform>
        <id>Q8WWU5-2</id>
        <name>2</name>
        <name evidence="12">TCP11a</name>
        <sequence type="described" ref="VSP_032186"/>
    </isoform>
    <isoform>
        <id>Q8WWU5-3</id>
        <name>3</name>
        <name evidence="9">TCP11c</name>
        <sequence type="described" ref="VSP_032185"/>
    </isoform>
    <isoform>
        <id>Q8WWU5-4</id>
        <name>4</name>
        <sequence type="described" ref="VSP_045217"/>
    </isoform>
    <isoform>
        <id>Q8WWU5-5</id>
        <name>5</name>
        <sequence type="described" ref="VSP_047125 VSP_047126"/>
    </isoform>
    <isoform>
        <id>Q8WWU5-6</id>
        <name>6</name>
        <sequence type="described" ref="VSP_047124"/>
    </isoform>
    <isoform>
        <id>Q8WWU5-7</id>
        <name>7</name>
        <sequence type="described" ref="VSP_047125"/>
    </isoform>
</comment>
<comment type="tissue specificity">
    <text evidence="4 6">Isoform 2 and isoform 3 are expressed in sperm. Isoform 1 is not detected in sperm (at protein level) (PubMed:21597245). Testis-specific (PubMed:11756566). Isoform 1, isoform 2 and isoform 3 are expressed in sperm (PubMed:21597245).</text>
</comment>
<comment type="PTM">
    <text evidence="1">Constitutively phosphorylated on serine, threonine and tyrosine residues within the head and tail regions of noncapacitated spermatozoa. Phosphorylation on tyrosine residues increases upon sperm capacitation within the acrosomal region in a protein kinase A (PKA)-dependent signaling pathway.</text>
</comment>
<comment type="similarity">
    <text evidence="13">Belongs to the TCP11 family.</text>
</comment>
<gene>
    <name type="primary">TCP11</name>
</gene>
<evidence type="ECO:0000250" key="1">
    <source>
        <dbReference type="UniProtKB" id="Q01755"/>
    </source>
</evidence>
<evidence type="ECO:0000255" key="2"/>
<evidence type="ECO:0000256" key="3">
    <source>
        <dbReference type="SAM" id="MobiDB-lite"/>
    </source>
</evidence>
<evidence type="ECO:0000269" key="4">
    <source>
    </source>
</evidence>
<evidence type="ECO:0000269" key="5">
    <source>
    </source>
</evidence>
<evidence type="ECO:0000269" key="6">
    <source>
    </source>
</evidence>
<evidence type="ECO:0000303" key="7">
    <source>
    </source>
</evidence>
<evidence type="ECO:0000303" key="8">
    <source>
    </source>
</evidence>
<evidence type="ECO:0000303" key="9">
    <source>
    </source>
</evidence>
<evidence type="ECO:0000303" key="10">
    <source>
    </source>
</evidence>
<evidence type="ECO:0000303" key="11">
    <source>
    </source>
</evidence>
<evidence type="ECO:0000303" key="12">
    <source>
    </source>
</evidence>
<evidence type="ECO:0000305" key="13"/>
<feature type="chain" id="PRO_0000324298" description="T-complex protein 11 homolog">
    <location>
        <begin position="1"/>
        <end position="503"/>
    </location>
</feature>
<feature type="transmembrane region" description="Helical" evidence="2">
    <location>
        <begin position="330"/>
        <end position="349"/>
    </location>
</feature>
<feature type="region of interest" description="Disordered" evidence="3">
    <location>
        <begin position="1"/>
        <end position="42"/>
    </location>
</feature>
<feature type="region of interest" description="Disordered" evidence="3">
    <location>
        <begin position="254"/>
        <end position="285"/>
    </location>
</feature>
<feature type="compositionally biased region" description="Basic and acidic residues" evidence="3">
    <location>
        <begin position="1"/>
        <end position="22"/>
    </location>
</feature>
<feature type="compositionally biased region" description="Low complexity" evidence="3">
    <location>
        <begin position="263"/>
        <end position="285"/>
    </location>
</feature>
<feature type="splice variant" id="VSP_032186" description="In isoform 2." evidence="7 10 11">
    <original>MPDVKESVPPKYPGDSEGRSCKPETSGPPQEDKSGSEDPPPFLSVTGLTETVNEVSKLSNKIGMNCDYYMEEKVLPPS</original>
    <variation>MAPKGILGSFPTAMNL</variation>
    <location>
        <begin position="1"/>
        <end position="78"/>
    </location>
</feature>
<feature type="splice variant" id="VSP_032185" description="In isoform 3." evidence="9 11">
    <location>
        <begin position="1"/>
        <end position="63"/>
    </location>
</feature>
<feature type="splice variant" id="VSP_047124" description="In isoform 6." evidence="10">
    <original>MPDVKESVPPKYPGDSEGRSCKPETSGPPQEDKSGSEDPPPFLSVT</original>
    <variation>MTRGGGGG</variation>
    <location>
        <begin position="1"/>
        <end position="46"/>
    </location>
</feature>
<feature type="splice variant" id="VSP_045217" description="In isoform 4." evidence="10">
    <original>MPDVKESVPPKYPGDSEGRSCKPETSGPPQEDKSGSEDPPPF</original>
    <variation>MTRGGGGGV</variation>
    <location>
        <begin position="1"/>
        <end position="42"/>
    </location>
</feature>
<feature type="splice variant" id="VSP_047125" description="In isoform 5 and isoform 7." evidence="10">
    <original>M</original>
    <variation>MTRGGGGGDTISKM</variation>
    <location>
        <position position="1"/>
    </location>
</feature>
<feature type="splice variant" id="VSP_047126" description="In isoform 5." evidence="10">
    <original>FLSVTG</original>
    <variation>C</variation>
    <location>
        <begin position="42"/>
        <end position="47"/>
    </location>
</feature>
<feature type="sequence variant" id="VAR_039692" description="In dbSNP:rs2234045." evidence="5">
    <original>G</original>
    <variation>A</variation>
    <location>
        <position position="253"/>
    </location>
</feature>
<feature type="sequence variant" id="VAR_039693" description="In dbSNP:rs2234051.">
    <original>R</original>
    <variation>Q</variation>
    <location>
        <position position="429"/>
    </location>
</feature>
<feature type="sequence conflict" description="In Ref. 4; BAH13714." evidence="13" ref="4">
    <original>L</original>
    <variation>R</variation>
    <location>
        <position position="157"/>
    </location>
</feature>
<keyword id="KW-0025">Alternative splicing</keyword>
<keyword id="KW-0966">Cell projection</keyword>
<keyword id="KW-0969">Cilium</keyword>
<keyword id="KW-0968">Cytoplasmic vesicle</keyword>
<keyword id="KW-0217">Developmental protein</keyword>
<keyword id="KW-0221">Differentiation</keyword>
<keyword id="KW-0282">Flagellum</keyword>
<keyword id="KW-0472">Membrane</keyword>
<keyword id="KW-1267">Proteomics identification</keyword>
<keyword id="KW-1185">Reference proteome</keyword>
<keyword id="KW-0744">Spermatogenesis</keyword>
<keyword id="KW-0812">Transmembrane</keyword>
<keyword id="KW-1133">Transmembrane helix</keyword>
<proteinExistence type="evidence at protein level"/>